<organism>
    <name type="scientific">Methanosarcina barkeri (strain Fusaro / DSM 804)</name>
    <dbReference type="NCBI Taxonomy" id="269797"/>
    <lineage>
        <taxon>Archaea</taxon>
        <taxon>Methanobacteriati</taxon>
        <taxon>Methanobacteriota</taxon>
        <taxon>Stenosarchaea group</taxon>
        <taxon>Methanomicrobia</taxon>
        <taxon>Methanosarcinales</taxon>
        <taxon>Methanosarcinaceae</taxon>
        <taxon>Methanosarcina</taxon>
    </lineage>
</organism>
<dbReference type="EMBL" id="CP000099">
    <property type="protein sequence ID" value="AAZ69084.1"/>
    <property type="molecule type" value="Genomic_DNA"/>
</dbReference>
<dbReference type="SMR" id="Q46GA8"/>
<dbReference type="STRING" id="269797.Mbar_A0097"/>
<dbReference type="PaxDb" id="269797-Mbar_A0097"/>
<dbReference type="KEGG" id="mba:Mbar_A0097"/>
<dbReference type="eggNOG" id="arCOG04092">
    <property type="taxonomic scope" value="Archaea"/>
</dbReference>
<dbReference type="HOGENOM" id="CLU_061015_3_0_2"/>
<dbReference type="GO" id="GO:1990904">
    <property type="term" value="C:ribonucleoprotein complex"/>
    <property type="evidence" value="ECO:0007669"/>
    <property type="project" value="UniProtKB-KW"/>
</dbReference>
<dbReference type="GO" id="GO:0005840">
    <property type="term" value="C:ribosome"/>
    <property type="evidence" value="ECO:0007669"/>
    <property type="project" value="UniProtKB-KW"/>
</dbReference>
<dbReference type="GO" id="GO:0019843">
    <property type="term" value="F:rRNA binding"/>
    <property type="evidence" value="ECO:0007669"/>
    <property type="project" value="UniProtKB-UniRule"/>
</dbReference>
<dbReference type="GO" id="GO:0003735">
    <property type="term" value="F:structural constituent of ribosome"/>
    <property type="evidence" value="ECO:0007669"/>
    <property type="project" value="InterPro"/>
</dbReference>
<dbReference type="GO" id="GO:0000049">
    <property type="term" value="F:tRNA binding"/>
    <property type="evidence" value="ECO:0007669"/>
    <property type="project" value="UniProtKB-UniRule"/>
</dbReference>
<dbReference type="GO" id="GO:0006412">
    <property type="term" value="P:translation"/>
    <property type="evidence" value="ECO:0007669"/>
    <property type="project" value="UniProtKB-UniRule"/>
</dbReference>
<dbReference type="FunFam" id="3.30.1440.10:FF:000002">
    <property type="entry name" value="60S ribosomal protein L11"/>
    <property type="match status" value="1"/>
</dbReference>
<dbReference type="Gene3D" id="3.30.1440.10">
    <property type="match status" value="1"/>
</dbReference>
<dbReference type="HAMAP" id="MF_01333_A">
    <property type="entry name" value="Ribosomal_uL5_A"/>
    <property type="match status" value="1"/>
</dbReference>
<dbReference type="InterPro" id="IPR002132">
    <property type="entry name" value="Ribosomal_uL5"/>
</dbReference>
<dbReference type="InterPro" id="IPR022804">
    <property type="entry name" value="Ribosomal_uL5_arc"/>
</dbReference>
<dbReference type="InterPro" id="IPR031309">
    <property type="entry name" value="Ribosomal_uL5_C"/>
</dbReference>
<dbReference type="InterPro" id="IPR020929">
    <property type="entry name" value="Ribosomal_uL5_CS"/>
</dbReference>
<dbReference type="InterPro" id="IPR022803">
    <property type="entry name" value="Ribosomal_uL5_dom_sf"/>
</dbReference>
<dbReference type="InterPro" id="IPR031310">
    <property type="entry name" value="Ribosomal_uL5_N"/>
</dbReference>
<dbReference type="NCBIfam" id="NF003258">
    <property type="entry name" value="PRK04219.1"/>
    <property type="match status" value="1"/>
</dbReference>
<dbReference type="PANTHER" id="PTHR11994">
    <property type="entry name" value="60S RIBOSOMAL PROTEIN L11-RELATED"/>
    <property type="match status" value="1"/>
</dbReference>
<dbReference type="Pfam" id="PF00281">
    <property type="entry name" value="Ribosomal_L5"/>
    <property type="match status" value="1"/>
</dbReference>
<dbReference type="Pfam" id="PF00673">
    <property type="entry name" value="Ribosomal_L5_C"/>
    <property type="match status" value="1"/>
</dbReference>
<dbReference type="PIRSF" id="PIRSF002161">
    <property type="entry name" value="Ribosomal_L5"/>
    <property type="match status" value="1"/>
</dbReference>
<dbReference type="SUPFAM" id="SSF55282">
    <property type="entry name" value="RL5-like"/>
    <property type="match status" value="1"/>
</dbReference>
<dbReference type="PROSITE" id="PS00358">
    <property type="entry name" value="RIBOSOMAL_L5"/>
    <property type="match status" value="1"/>
</dbReference>
<comment type="function">
    <text evidence="1">This is one of the proteins that bind and probably mediate the attachment of the 5S RNA into the large ribosomal subunit, where it forms part of the central protuberance. In the 70S ribosome it contacts protein S13 of the 30S subunit (bridge B1b), connecting the 2 subunits; this bridge is implicated in subunit movement. May contact the P site tRNA; the 5S rRNA and some of its associated proteins might help stabilize positioning of ribosome-bound tRNAs.</text>
</comment>
<comment type="subunit">
    <text evidence="1">Part of the 50S ribosomal subunit; contacts the 5S rRNA and probably tRNA. Forms a bridge to the 30S subunit in the 70S ribosome.</text>
</comment>
<comment type="similarity">
    <text evidence="1">Belongs to the universal ribosomal protein uL5 family.</text>
</comment>
<name>RL5_METBF</name>
<evidence type="ECO:0000255" key="1">
    <source>
        <dbReference type="HAMAP-Rule" id="MF_01333"/>
    </source>
</evidence>
<evidence type="ECO:0000305" key="2"/>
<reference key="1">
    <citation type="journal article" date="2006" name="J. Bacteriol.">
        <title>The Methanosarcina barkeri genome: comparative analysis with Methanosarcina acetivorans and Methanosarcina mazei reveals extensive rearrangement within methanosarcinal genomes.</title>
        <authorList>
            <person name="Maeder D.L."/>
            <person name="Anderson I."/>
            <person name="Brettin T.S."/>
            <person name="Bruce D.C."/>
            <person name="Gilna P."/>
            <person name="Han C.S."/>
            <person name="Lapidus A."/>
            <person name="Metcalf W.W."/>
            <person name="Saunders E."/>
            <person name="Tapia R."/>
            <person name="Sowers K.R."/>
        </authorList>
    </citation>
    <scope>NUCLEOTIDE SEQUENCE [LARGE SCALE GENOMIC DNA]</scope>
    <source>
        <strain>Fusaro / DSM 804</strain>
    </source>
</reference>
<feature type="chain" id="PRO_0000243098" description="Large ribosomal subunit protein uL5">
    <location>
        <begin position="1"/>
        <end position="169"/>
    </location>
</feature>
<gene>
    <name evidence="1" type="primary">rpl5</name>
    <name type="ordered locus">Mbar_A0097</name>
</gene>
<accession>Q46GA8</accession>
<proteinExistence type="inferred from homology"/>
<sequence length="169" mass="18887">MSNVMRTPVVEKVIVHMGVGESGQHLVDAEEILRNITGQEVVRCFAKRTLPAFSIKKNEPIGCKVTLRGQRAQQFLETALGIVDKTLVRSQFDSLGNVSFGIEEHTDFPGMKYDPNIGVFGMDVTVVIKRPGERICKRRIATRKIPTNHRVTLEDSIAFLNDSYGVEVM</sequence>
<keyword id="KW-0687">Ribonucleoprotein</keyword>
<keyword id="KW-0689">Ribosomal protein</keyword>
<keyword id="KW-0694">RNA-binding</keyword>
<keyword id="KW-0699">rRNA-binding</keyword>
<keyword id="KW-0820">tRNA-binding</keyword>
<protein>
    <recommendedName>
        <fullName evidence="1">Large ribosomal subunit protein uL5</fullName>
    </recommendedName>
    <alternativeName>
        <fullName evidence="2">50S ribosomal protein L5</fullName>
    </alternativeName>
</protein>